<dbReference type="EMBL" id="BA000033">
    <property type="protein sequence ID" value="BAB95044.1"/>
    <property type="molecule type" value="Genomic_DNA"/>
</dbReference>
<dbReference type="RefSeq" id="WP_000516264.1">
    <property type="nucleotide sequence ID" value="NC_003923.1"/>
</dbReference>
<dbReference type="SMR" id="Q8NWX9"/>
<dbReference type="KEGG" id="sam:MW1179"/>
<dbReference type="HOGENOM" id="CLU_004131_4_1_9"/>
<dbReference type="GO" id="GO:0032300">
    <property type="term" value="C:mismatch repair complex"/>
    <property type="evidence" value="ECO:0007669"/>
    <property type="project" value="InterPro"/>
</dbReference>
<dbReference type="GO" id="GO:0005524">
    <property type="term" value="F:ATP binding"/>
    <property type="evidence" value="ECO:0007669"/>
    <property type="project" value="InterPro"/>
</dbReference>
<dbReference type="GO" id="GO:0016887">
    <property type="term" value="F:ATP hydrolysis activity"/>
    <property type="evidence" value="ECO:0007669"/>
    <property type="project" value="InterPro"/>
</dbReference>
<dbReference type="GO" id="GO:0140664">
    <property type="term" value="F:ATP-dependent DNA damage sensor activity"/>
    <property type="evidence" value="ECO:0007669"/>
    <property type="project" value="InterPro"/>
</dbReference>
<dbReference type="GO" id="GO:0030983">
    <property type="term" value="F:mismatched DNA binding"/>
    <property type="evidence" value="ECO:0007669"/>
    <property type="project" value="InterPro"/>
</dbReference>
<dbReference type="GO" id="GO:0006298">
    <property type="term" value="P:mismatch repair"/>
    <property type="evidence" value="ECO:0007669"/>
    <property type="project" value="UniProtKB-UniRule"/>
</dbReference>
<dbReference type="CDD" id="cd16926">
    <property type="entry name" value="HATPase_MutL-MLH-PMS-like"/>
    <property type="match status" value="1"/>
</dbReference>
<dbReference type="CDD" id="cd00782">
    <property type="entry name" value="MutL_Trans"/>
    <property type="match status" value="1"/>
</dbReference>
<dbReference type="FunFam" id="3.30.1370.100:FF:000004">
    <property type="entry name" value="DNA mismatch repair endonuclease MutL"/>
    <property type="match status" value="1"/>
</dbReference>
<dbReference type="FunFam" id="3.30.230.10:FF:000036">
    <property type="entry name" value="DNA mismatch repair endonuclease MutL"/>
    <property type="match status" value="1"/>
</dbReference>
<dbReference type="FunFam" id="3.30.565.10:FF:000003">
    <property type="entry name" value="DNA mismatch repair endonuclease MutL"/>
    <property type="match status" value="1"/>
</dbReference>
<dbReference type="Gene3D" id="3.30.230.10">
    <property type="match status" value="1"/>
</dbReference>
<dbReference type="Gene3D" id="3.30.565.10">
    <property type="entry name" value="Histidine kinase-like ATPase, C-terminal domain"/>
    <property type="match status" value="1"/>
</dbReference>
<dbReference type="Gene3D" id="3.30.1540.20">
    <property type="entry name" value="MutL, C-terminal domain, dimerisation subdomain"/>
    <property type="match status" value="1"/>
</dbReference>
<dbReference type="Gene3D" id="3.30.1370.100">
    <property type="entry name" value="MutL, C-terminal domain, regulatory subdomain"/>
    <property type="match status" value="1"/>
</dbReference>
<dbReference type="HAMAP" id="MF_00149">
    <property type="entry name" value="DNA_mis_repair"/>
    <property type="match status" value="1"/>
</dbReference>
<dbReference type="InterPro" id="IPR014762">
    <property type="entry name" value="DNA_mismatch_repair_CS"/>
</dbReference>
<dbReference type="InterPro" id="IPR020667">
    <property type="entry name" value="DNA_mismatch_repair_MutL"/>
</dbReference>
<dbReference type="InterPro" id="IPR013507">
    <property type="entry name" value="DNA_mismatch_S5_2-like"/>
</dbReference>
<dbReference type="InterPro" id="IPR036890">
    <property type="entry name" value="HATPase_C_sf"/>
</dbReference>
<dbReference type="InterPro" id="IPR002099">
    <property type="entry name" value="MutL/Mlh/PMS"/>
</dbReference>
<dbReference type="InterPro" id="IPR038973">
    <property type="entry name" value="MutL/Mlh/Pms-like"/>
</dbReference>
<dbReference type="InterPro" id="IPR014790">
    <property type="entry name" value="MutL_C"/>
</dbReference>
<dbReference type="InterPro" id="IPR042120">
    <property type="entry name" value="MutL_C_dimsub"/>
</dbReference>
<dbReference type="InterPro" id="IPR042121">
    <property type="entry name" value="MutL_C_regsub"/>
</dbReference>
<dbReference type="InterPro" id="IPR037198">
    <property type="entry name" value="MutL_C_sf"/>
</dbReference>
<dbReference type="InterPro" id="IPR020568">
    <property type="entry name" value="Ribosomal_Su5_D2-typ_SF"/>
</dbReference>
<dbReference type="InterPro" id="IPR014721">
    <property type="entry name" value="Ribsml_uS5_D2-typ_fold_subgr"/>
</dbReference>
<dbReference type="NCBIfam" id="TIGR00585">
    <property type="entry name" value="mutl"/>
    <property type="match status" value="1"/>
</dbReference>
<dbReference type="NCBIfam" id="NF000950">
    <property type="entry name" value="PRK00095.1-3"/>
    <property type="match status" value="1"/>
</dbReference>
<dbReference type="PANTHER" id="PTHR10073">
    <property type="entry name" value="DNA MISMATCH REPAIR PROTEIN MLH, PMS, MUTL"/>
    <property type="match status" value="1"/>
</dbReference>
<dbReference type="PANTHER" id="PTHR10073:SF12">
    <property type="entry name" value="DNA MISMATCH REPAIR PROTEIN MLH1"/>
    <property type="match status" value="1"/>
</dbReference>
<dbReference type="Pfam" id="PF01119">
    <property type="entry name" value="DNA_mis_repair"/>
    <property type="match status" value="1"/>
</dbReference>
<dbReference type="Pfam" id="PF13589">
    <property type="entry name" value="HATPase_c_3"/>
    <property type="match status" value="1"/>
</dbReference>
<dbReference type="Pfam" id="PF08676">
    <property type="entry name" value="MutL_C"/>
    <property type="match status" value="1"/>
</dbReference>
<dbReference type="SMART" id="SM01340">
    <property type="entry name" value="DNA_mis_repair"/>
    <property type="match status" value="1"/>
</dbReference>
<dbReference type="SMART" id="SM00853">
    <property type="entry name" value="MutL_C"/>
    <property type="match status" value="1"/>
</dbReference>
<dbReference type="SUPFAM" id="SSF55874">
    <property type="entry name" value="ATPase domain of HSP90 chaperone/DNA topoisomerase II/histidine kinase"/>
    <property type="match status" value="1"/>
</dbReference>
<dbReference type="SUPFAM" id="SSF118116">
    <property type="entry name" value="DNA mismatch repair protein MutL"/>
    <property type="match status" value="1"/>
</dbReference>
<dbReference type="SUPFAM" id="SSF54211">
    <property type="entry name" value="Ribosomal protein S5 domain 2-like"/>
    <property type="match status" value="1"/>
</dbReference>
<dbReference type="PROSITE" id="PS00058">
    <property type="entry name" value="DNA_MISMATCH_REPAIR_1"/>
    <property type="match status" value="1"/>
</dbReference>
<protein>
    <recommendedName>
        <fullName evidence="1">DNA mismatch repair protein MutL</fullName>
    </recommendedName>
</protein>
<feature type="chain" id="PRO_0000177974" description="DNA mismatch repair protein MutL">
    <location>
        <begin position="1"/>
        <end position="669"/>
    </location>
</feature>
<feature type="region of interest" description="Disordered" evidence="2">
    <location>
        <begin position="356"/>
        <end position="377"/>
    </location>
</feature>
<feature type="compositionally biased region" description="Polar residues" evidence="2">
    <location>
        <begin position="361"/>
        <end position="377"/>
    </location>
</feature>
<sequence length="669" mass="76897">MGKIKELQTSLANKIAAGEVVERPSSVVKELLENAIDAGATEISIEVEESGVQSIRVVDNGSGIEAEDLGLVFHRHATSKLDQDEDLFHIRTLGFRGEALASISSVAKVTLKTCTDNANGNEIYVENGEILNHKPAKAKKGTDILVESLFYNTPARLKYIKSLYTELGKITDIVNRMAMSHPDIRIALISDGKTMLSTNGSGRTNEVMAEIYGMKVARDLVHISGDTSDYHIEGFVAKPEHSRSNKHYISIFINGRYIKNFMLNKAILEGYHTLLTIGRFPICYINIEMDPILVDVNVHPTKLEVRLSKEEQLYQLIVSKIQEAFKDRILIPKNNLDYVPKKNKVLHSFEQQKIEFEQRQNTENNQEKTFSSEESNSKPFMVENQNDEIVIREDSYNPFVTKTSESLIADDESSGYNNTREKDEDYFKKQQEILQEMDQTFDSNDDTSVQNYENKASDDYYDVNDIKGTKSKDPKRRIPYMEIVGQVHGTYIIAQNEFGMYMIDQHAAQERIKYEYFRDKIGEVTNEVQDLLIPLTFHFSKDEQLVIDQYKNELQQVGIMLEHFGGHDYIVSSYPVWFPKDEVEEIIKDMIELILEEKKVDIKKLREDVAIMMSCKKSIKANHYLQKHEMSDLIDQLREAEDPFTCPHGRPIIINFSKYELEKLFKRVM</sequence>
<comment type="function">
    <text evidence="1">This protein is involved in the repair of mismatches in DNA. It is required for dam-dependent methyl-directed DNA mismatch repair. May act as a 'molecular matchmaker', a protein that promotes the formation of a stable complex between two or more DNA-binding proteins in an ATP-dependent manner without itself being part of a final effector complex.</text>
</comment>
<comment type="similarity">
    <text evidence="1">Belongs to the DNA mismatch repair MutL/HexB family.</text>
</comment>
<gene>
    <name evidence="1" type="primary">mutL</name>
    <name type="ordered locus">MW1179</name>
</gene>
<reference key="1">
    <citation type="journal article" date="2002" name="Lancet">
        <title>Genome and virulence determinants of high virulence community-acquired MRSA.</title>
        <authorList>
            <person name="Baba T."/>
            <person name="Takeuchi F."/>
            <person name="Kuroda M."/>
            <person name="Yuzawa H."/>
            <person name="Aoki K."/>
            <person name="Oguchi A."/>
            <person name="Nagai Y."/>
            <person name="Iwama N."/>
            <person name="Asano K."/>
            <person name="Naimi T."/>
            <person name="Kuroda H."/>
            <person name="Cui L."/>
            <person name="Yamamoto K."/>
            <person name="Hiramatsu K."/>
        </authorList>
    </citation>
    <scope>NUCLEOTIDE SEQUENCE [LARGE SCALE GENOMIC DNA]</scope>
    <source>
        <strain>MW2</strain>
    </source>
</reference>
<organism>
    <name type="scientific">Staphylococcus aureus (strain MW2)</name>
    <dbReference type="NCBI Taxonomy" id="196620"/>
    <lineage>
        <taxon>Bacteria</taxon>
        <taxon>Bacillati</taxon>
        <taxon>Bacillota</taxon>
        <taxon>Bacilli</taxon>
        <taxon>Bacillales</taxon>
        <taxon>Staphylococcaceae</taxon>
        <taxon>Staphylococcus</taxon>
    </lineage>
</organism>
<name>MUTL_STAAW</name>
<evidence type="ECO:0000255" key="1">
    <source>
        <dbReference type="HAMAP-Rule" id="MF_00149"/>
    </source>
</evidence>
<evidence type="ECO:0000256" key="2">
    <source>
        <dbReference type="SAM" id="MobiDB-lite"/>
    </source>
</evidence>
<proteinExistence type="inferred from homology"/>
<keyword id="KW-0227">DNA damage</keyword>
<keyword id="KW-0234">DNA repair</keyword>
<accession>Q8NWX9</accession>